<evidence type="ECO:0000255" key="1">
    <source>
        <dbReference type="HAMAP-Rule" id="MF_00268"/>
    </source>
</evidence>
<gene>
    <name evidence="1" type="primary">recA</name>
</gene>
<proteinExistence type="inferred from homology"/>
<organism>
    <name type="scientific">Paracoccus denitrificans</name>
    <dbReference type="NCBI Taxonomy" id="266"/>
    <lineage>
        <taxon>Bacteria</taxon>
        <taxon>Pseudomonadati</taxon>
        <taxon>Pseudomonadota</taxon>
        <taxon>Alphaproteobacteria</taxon>
        <taxon>Rhodobacterales</taxon>
        <taxon>Paracoccaceae</taxon>
        <taxon>Paracoccus</taxon>
    </lineage>
</organism>
<protein>
    <recommendedName>
        <fullName evidence="1">Protein RecA</fullName>
    </recommendedName>
    <alternativeName>
        <fullName evidence="1">Recombinase A</fullName>
    </alternativeName>
</protein>
<keyword id="KW-0067">ATP-binding</keyword>
<keyword id="KW-0963">Cytoplasm</keyword>
<keyword id="KW-0227">DNA damage</keyword>
<keyword id="KW-0233">DNA recombination</keyword>
<keyword id="KW-0234">DNA repair</keyword>
<keyword id="KW-0238">DNA-binding</keyword>
<keyword id="KW-0547">Nucleotide-binding</keyword>
<keyword id="KW-0742">SOS response</keyword>
<name>RECA_PARDE</name>
<accession>P95469</accession>
<sequence length="356" mass="38092">MAGATLFDMNDKRSADKQKALDSALAQIERQFGKGSIMKLGADNPVAEIEATSTGSLGLDIALGIGGLPKGRIIEIFGPESSGKTTLTLHVVAEEQKKGGVCAFVDAEHALDPQYAKKLGVNLDELLISQPDTGEQALEIVDTLVASGAVSLVVVDSVAALTPKSEIEGDMGDMQMGSQARLMSQAMRKLTASIGRSNCMVIFINQIRMKIGVMFGSPETTTGGNALKFYASVRLDIRRAGSIKDRDEVTGNATRVKVVKNKVAPPFRQVEFDIMYGEGISKVGELIDLGIKAGVVEKSGSWYSYGDERIGQGRENAKQFLRDHPDMAHAIEDKIRASHGLDFGVADDGDEVMAED</sequence>
<reference key="1">
    <citation type="journal article" date="1997" name="FEMS Microbiol. Lett.">
        <title>Cloning and characterization of the recA of Paracoccus denitrificans and construction of a recA-deficient mutant.</title>
        <authorList>
            <person name="Fernandez de Henestrosa A.R."/>
            <person name="del Rey A."/>
            <person name="Tarrago R."/>
            <person name="Barbe J."/>
        </authorList>
    </citation>
    <scope>NUCLEOTIDE SEQUENCE [GENOMIC DNA]</scope>
    <source>
        <strain>ATCC 17741 / DSM 413 / NBRC 16712 / NCCB 22021 / NCIMB 11627</strain>
    </source>
</reference>
<comment type="function">
    <text>Can catalyze the hydrolysis of ATP in the presence of single-stranded DNA, the ATP-dependent uptake of single-stranded DNA by duplex DNA, and the ATP-dependent hybridization of homologous single-stranded DNAs. It interacts with LexA causing its activation and leading to its autocatalytic cleavage.</text>
</comment>
<comment type="subcellular location">
    <subcellularLocation>
        <location evidence="1">Cytoplasm</location>
    </subcellularLocation>
</comment>
<comment type="similarity">
    <text evidence="1">Belongs to the RecA family.</text>
</comment>
<dbReference type="EMBL" id="U59631">
    <property type="protein sequence ID" value="AAB51561.1"/>
    <property type="molecule type" value="Genomic_DNA"/>
</dbReference>
<dbReference type="SMR" id="P95469"/>
<dbReference type="GO" id="GO:0005829">
    <property type="term" value="C:cytosol"/>
    <property type="evidence" value="ECO:0007669"/>
    <property type="project" value="TreeGrafter"/>
</dbReference>
<dbReference type="GO" id="GO:0005524">
    <property type="term" value="F:ATP binding"/>
    <property type="evidence" value="ECO:0007669"/>
    <property type="project" value="UniProtKB-UniRule"/>
</dbReference>
<dbReference type="GO" id="GO:0016887">
    <property type="term" value="F:ATP hydrolysis activity"/>
    <property type="evidence" value="ECO:0007669"/>
    <property type="project" value="InterPro"/>
</dbReference>
<dbReference type="GO" id="GO:0140664">
    <property type="term" value="F:ATP-dependent DNA damage sensor activity"/>
    <property type="evidence" value="ECO:0007669"/>
    <property type="project" value="InterPro"/>
</dbReference>
<dbReference type="GO" id="GO:0003684">
    <property type="term" value="F:damaged DNA binding"/>
    <property type="evidence" value="ECO:0007669"/>
    <property type="project" value="UniProtKB-UniRule"/>
</dbReference>
<dbReference type="GO" id="GO:0003697">
    <property type="term" value="F:single-stranded DNA binding"/>
    <property type="evidence" value="ECO:0007669"/>
    <property type="project" value="UniProtKB-UniRule"/>
</dbReference>
<dbReference type="GO" id="GO:0006310">
    <property type="term" value="P:DNA recombination"/>
    <property type="evidence" value="ECO:0007669"/>
    <property type="project" value="UniProtKB-UniRule"/>
</dbReference>
<dbReference type="GO" id="GO:0006281">
    <property type="term" value="P:DNA repair"/>
    <property type="evidence" value="ECO:0007669"/>
    <property type="project" value="UniProtKB-UniRule"/>
</dbReference>
<dbReference type="GO" id="GO:0009432">
    <property type="term" value="P:SOS response"/>
    <property type="evidence" value="ECO:0007669"/>
    <property type="project" value="UniProtKB-UniRule"/>
</dbReference>
<dbReference type="CDD" id="cd00983">
    <property type="entry name" value="RecA"/>
    <property type="match status" value="1"/>
</dbReference>
<dbReference type="FunFam" id="3.40.50.300:FF:000087">
    <property type="entry name" value="Recombinase RecA"/>
    <property type="match status" value="1"/>
</dbReference>
<dbReference type="Gene3D" id="3.40.50.300">
    <property type="entry name" value="P-loop containing nucleotide triphosphate hydrolases"/>
    <property type="match status" value="1"/>
</dbReference>
<dbReference type="HAMAP" id="MF_00268">
    <property type="entry name" value="RecA"/>
    <property type="match status" value="1"/>
</dbReference>
<dbReference type="InterPro" id="IPR003593">
    <property type="entry name" value="AAA+_ATPase"/>
</dbReference>
<dbReference type="InterPro" id="IPR013765">
    <property type="entry name" value="DNA_recomb/repair_RecA"/>
</dbReference>
<dbReference type="InterPro" id="IPR020584">
    <property type="entry name" value="DNA_recomb/repair_RecA_CS"/>
</dbReference>
<dbReference type="InterPro" id="IPR027417">
    <property type="entry name" value="P-loop_NTPase"/>
</dbReference>
<dbReference type="InterPro" id="IPR049261">
    <property type="entry name" value="RecA-like_C"/>
</dbReference>
<dbReference type="InterPro" id="IPR049428">
    <property type="entry name" value="RecA-like_N"/>
</dbReference>
<dbReference type="InterPro" id="IPR020588">
    <property type="entry name" value="RecA_ATP-bd"/>
</dbReference>
<dbReference type="InterPro" id="IPR023400">
    <property type="entry name" value="RecA_C_sf"/>
</dbReference>
<dbReference type="InterPro" id="IPR020587">
    <property type="entry name" value="RecA_monomer-monomer_interface"/>
</dbReference>
<dbReference type="NCBIfam" id="TIGR02012">
    <property type="entry name" value="tigrfam_recA"/>
    <property type="match status" value="1"/>
</dbReference>
<dbReference type="PANTHER" id="PTHR45900:SF1">
    <property type="entry name" value="MITOCHONDRIAL DNA REPAIR PROTEIN RECA HOMOLOG-RELATED"/>
    <property type="match status" value="1"/>
</dbReference>
<dbReference type="PANTHER" id="PTHR45900">
    <property type="entry name" value="RECA"/>
    <property type="match status" value="1"/>
</dbReference>
<dbReference type="Pfam" id="PF00154">
    <property type="entry name" value="RecA"/>
    <property type="match status" value="1"/>
</dbReference>
<dbReference type="Pfam" id="PF21096">
    <property type="entry name" value="RecA_C"/>
    <property type="match status" value="1"/>
</dbReference>
<dbReference type="PRINTS" id="PR00142">
    <property type="entry name" value="RECA"/>
</dbReference>
<dbReference type="SMART" id="SM00382">
    <property type="entry name" value="AAA"/>
    <property type="match status" value="1"/>
</dbReference>
<dbReference type="SUPFAM" id="SSF52540">
    <property type="entry name" value="P-loop containing nucleoside triphosphate hydrolases"/>
    <property type="match status" value="1"/>
</dbReference>
<dbReference type="SUPFAM" id="SSF54752">
    <property type="entry name" value="RecA protein, C-terminal domain"/>
    <property type="match status" value="1"/>
</dbReference>
<dbReference type="PROSITE" id="PS00321">
    <property type="entry name" value="RECA_1"/>
    <property type="match status" value="1"/>
</dbReference>
<dbReference type="PROSITE" id="PS50162">
    <property type="entry name" value="RECA_2"/>
    <property type="match status" value="1"/>
</dbReference>
<dbReference type="PROSITE" id="PS50163">
    <property type="entry name" value="RECA_3"/>
    <property type="match status" value="1"/>
</dbReference>
<feature type="chain" id="PRO_0000122788" description="Protein RecA">
    <location>
        <begin position="1"/>
        <end position="356"/>
    </location>
</feature>
<feature type="binding site" evidence="1">
    <location>
        <begin position="78"/>
        <end position="85"/>
    </location>
    <ligand>
        <name>ATP</name>
        <dbReference type="ChEBI" id="CHEBI:30616"/>
    </ligand>
</feature>